<comment type="function">
    <text evidence="1">One of the components of the core complex of photosystem II (PSII). It binds chlorophyll and helps catalyze the primary light-induced photochemical processes of PSII. PSII is a light-driven water:plastoquinone oxidoreductase, using light energy to abstract electrons from H(2)O, generating O(2) and a proton gradient subsequently used for ATP formation.</text>
</comment>
<comment type="cofactor">
    <text evidence="1">Binds multiple chlorophylls. PSII binds additional chlorophylls, carotenoids and specific lipids.</text>
</comment>
<comment type="subunit">
    <text evidence="1">PSII is composed of 1 copy each of membrane proteins PsbA, PsbB, PsbC, PsbD, PsbE, PsbF, PsbH, PsbI, PsbJ, PsbK, PsbL, PsbM, PsbT, PsbX, PsbY, PsbZ, Psb30/Ycf12, at least 3 peripheral proteins of the oxygen-evolving complex and a large number of cofactors. It forms dimeric complexes.</text>
</comment>
<comment type="subcellular location">
    <subcellularLocation>
        <location evidence="1">Plastid</location>
        <location evidence="1">Chloroplast thylakoid membrane</location>
        <topology evidence="1">Multi-pass membrane protein</topology>
    </subcellularLocation>
</comment>
<comment type="similarity">
    <text evidence="1">Belongs to the PsbB/PsbC family. PsbB subfamily.</text>
</comment>
<protein>
    <recommendedName>
        <fullName evidence="1">Photosystem II CP47 reaction center protein</fullName>
    </recommendedName>
    <alternativeName>
        <fullName evidence="1">PSII 47 kDa protein</fullName>
    </alternativeName>
    <alternativeName>
        <fullName evidence="1">Protein CP-47</fullName>
    </alternativeName>
</protein>
<organism>
    <name type="scientific">Calycanthus floridus var. glaucus</name>
    <name type="common">Eastern sweetshrub</name>
    <name type="synonym">Calycanthus fertilis var. ferax</name>
    <dbReference type="NCBI Taxonomy" id="212734"/>
    <lineage>
        <taxon>Eukaryota</taxon>
        <taxon>Viridiplantae</taxon>
        <taxon>Streptophyta</taxon>
        <taxon>Embryophyta</taxon>
        <taxon>Tracheophyta</taxon>
        <taxon>Spermatophyta</taxon>
        <taxon>Magnoliopsida</taxon>
        <taxon>Magnoliidae</taxon>
        <taxon>Laurales</taxon>
        <taxon>Calycanthaceae</taxon>
        <taxon>Calycanthus</taxon>
    </lineage>
</organism>
<reference key="1">
    <citation type="journal article" date="2003" name="Plant Syst. Evol.">
        <title>The chloroplast genome of the 'basal' angiosperm Calycanthus fertilis -- structural and phylogenetic analyses.</title>
        <authorList>
            <person name="Goremykin V.V."/>
            <person name="Hirsch-Ernst K.I."/>
            <person name="Woelfl S."/>
            <person name="Hellwig F.H."/>
        </authorList>
    </citation>
    <scope>NUCLEOTIDE SEQUENCE [LARGE SCALE GENOMIC DNA]</scope>
</reference>
<feature type="chain" id="PRO_0000359801" description="Photosystem II CP47 reaction center protein">
    <location>
        <begin position="1"/>
        <end position="508"/>
    </location>
</feature>
<feature type="transmembrane region" description="Helical" evidence="1">
    <location>
        <begin position="21"/>
        <end position="36"/>
    </location>
</feature>
<feature type="transmembrane region" description="Helical" evidence="1">
    <location>
        <begin position="101"/>
        <end position="115"/>
    </location>
</feature>
<feature type="transmembrane region" description="Helical" evidence="1">
    <location>
        <begin position="140"/>
        <end position="156"/>
    </location>
</feature>
<feature type="transmembrane region" description="Helical" evidence="1">
    <location>
        <begin position="203"/>
        <end position="218"/>
    </location>
</feature>
<feature type="transmembrane region" description="Helical" evidence="1">
    <location>
        <begin position="237"/>
        <end position="252"/>
    </location>
</feature>
<feature type="transmembrane region" description="Helical" evidence="1">
    <location>
        <begin position="457"/>
        <end position="472"/>
    </location>
</feature>
<gene>
    <name evidence="1" type="primary">psbB</name>
</gene>
<evidence type="ECO:0000255" key="1">
    <source>
        <dbReference type="HAMAP-Rule" id="MF_01495"/>
    </source>
</evidence>
<keyword id="KW-0148">Chlorophyll</keyword>
<keyword id="KW-0150">Chloroplast</keyword>
<keyword id="KW-0157">Chromophore</keyword>
<keyword id="KW-0472">Membrane</keyword>
<keyword id="KW-0602">Photosynthesis</keyword>
<keyword id="KW-0604">Photosystem II</keyword>
<keyword id="KW-0934">Plastid</keyword>
<keyword id="KW-0793">Thylakoid</keyword>
<keyword id="KW-0812">Transmembrane</keyword>
<keyword id="KW-1133">Transmembrane helix</keyword>
<dbReference type="EMBL" id="AJ428413">
    <property type="protein sequence ID" value="CAD28746.1"/>
    <property type="molecule type" value="Genomic_DNA"/>
</dbReference>
<dbReference type="RefSeq" id="NP_862779.1">
    <property type="nucleotide sequence ID" value="NC_004993.1"/>
</dbReference>
<dbReference type="SMR" id="Q7YJV1"/>
<dbReference type="GeneID" id="2598006"/>
<dbReference type="GO" id="GO:0009535">
    <property type="term" value="C:chloroplast thylakoid membrane"/>
    <property type="evidence" value="ECO:0007669"/>
    <property type="project" value="UniProtKB-SubCell"/>
</dbReference>
<dbReference type="GO" id="GO:0009523">
    <property type="term" value="C:photosystem II"/>
    <property type="evidence" value="ECO:0007669"/>
    <property type="project" value="UniProtKB-KW"/>
</dbReference>
<dbReference type="GO" id="GO:0016168">
    <property type="term" value="F:chlorophyll binding"/>
    <property type="evidence" value="ECO:0007669"/>
    <property type="project" value="UniProtKB-UniRule"/>
</dbReference>
<dbReference type="GO" id="GO:0045156">
    <property type="term" value="F:electron transporter, transferring electrons within the cyclic electron transport pathway of photosynthesis activity"/>
    <property type="evidence" value="ECO:0007669"/>
    <property type="project" value="InterPro"/>
</dbReference>
<dbReference type="GO" id="GO:0009772">
    <property type="term" value="P:photosynthetic electron transport in photosystem II"/>
    <property type="evidence" value="ECO:0007669"/>
    <property type="project" value="InterPro"/>
</dbReference>
<dbReference type="FunFam" id="3.10.680.10:FF:000001">
    <property type="entry name" value="Photosystem II CP47 reaction center protein"/>
    <property type="match status" value="1"/>
</dbReference>
<dbReference type="Gene3D" id="3.10.680.10">
    <property type="entry name" value="Photosystem II CP47 reaction center protein"/>
    <property type="match status" value="1"/>
</dbReference>
<dbReference type="HAMAP" id="MF_01495">
    <property type="entry name" value="PSII_PsbB_CP47"/>
    <property type="match status" value="1"/>
</dbReference>
<dbReference type="InterPro" id="IPR000932">
    <property type="entry name" value="PS_antenna-like"/>
</dbReference>
<dbReference type="InterPro" id="IPR036001">
    <property type="entry name" value="PS_II_antenna-like_sf"/>
</dbReference>
<dbReference type="InterPro" id="IPR017486">
    <property type="entry name" value="PSII_PsbB"/>
</dbReference>
<dbReference type="NCBIfam" id="TIGR03039">
    <property type="entry name" value="PS_II_CP47"/>
    <property type="match status" value="1"/>
</dbReference>
<dbReference type="PANTHER" id="PTHR33180">
    <property type="entry name" value="PHOTOSYSTEM II CP43 REACTION CENTER PROTEIN"/>
    <property type="match status" value="1"/>
</dbReference>
<dbReference type="PANTHER" id="PTHR33180:SF37">
    <property type="entry name" value="PHOTOSYSTEM II CP43 REACTION CENTER PROTEIN"/>
    <property type="match status" value="1"/>
</dbReference>
<dbReference type="Pfam" id="PF00421">
    <property type="entry name" value="PSII"/>
    <property type="match status" value="1"/>
</dbReference>
<dbReference type="SUPFAM" id="SSF161077">
    <property type="entry name" value="Photosystem II antenna protein-like"/>
    <property type="match status" value="1"/>
</dbReference>
<name>PSBB_CALFG</name>
<sequence length="508" mass="56037">MGLPWYRVHTVVLNDPGRLLSVHIMHTALVSGWAGSMALYELAVFDPSDPVLDPMWRQGMFVIPFMTRLGITNSWGGWSITGGTITNPGIWSYEGVAGAHIVFSGLCFLAAIWHWVYWDLEIFCDERTGKPSLDLPKIFGIHLFLSGVACFGFGAFHVTGLYGPGIWVSDPYGLTGKVQPVNPAWGAEGFDPFVPGGIASHHIAAGTLGILAGLFHLSVRPPQRLYKGLRMGNIETVLSSSIAAVFFAAFVVAGTMWYGSATTPIELFGPTRYQWDQGYFQQEIYRRVGAGLAENLSLSEAWSKIPEKLAFYDYIGNNPAKGGLFRAGSMDNGDGIAVGWLGHPVFRDKEGHELFVRRMPTFFETFPVVLVDGDGIVRADVPFRRAESKYSVEQVGVTVEFYGGELNGVSYSDPATVKKYARRAQLGEIFELDRATLKSDGVFRSSPRGWFTFGHATFALLFFFGHIWHGARTLFRDVFAGIDPDLDAQVEFGAFQKLGDPTTRRQVV</sequence>
<accession>Q7YJV1</accession>
<proteinExistence type="inferred from homology"/>
<geneLocation type="chloroplast"/>